<accession>Q8R429</accession>
<name>AT2A1_MOUSE</name>
<dbReference type="EC" id="7.2.2.10" evidence="4 7"/>
<dbReference type="EMBL" id="AY081946">
    <property type="protein sequence ID" value="AAL87408.1"/>
    <property type="molecule type" value="mRNA"/>
</dbReference>
<dbReference type="EMBL" id="BC036292">
    <property type="protein sequence ID" value="AAH36292.1"/>
    <property type="molecule type" value="mRNA"/>
</dbReference>
<dbReference type="CCDS" id="CCDS40125.1"/>
<dbReference type="RefSeq" id="NP_031530.2">
    <property type="nucleotide sequence ID" value="NM_007504.2"/>
</dbReference>
<dbReference type="SMR" id="Q8R429"/>
<dbReference type="BioGRID" id="198248">
    <property type="interactions" value="9"/>
</dbReference>
<dbReference type="FunCoup" id="Q8R429">
    <property type="interactions" value="640"/>
</dbReference>
<dbReference type="IntAct" id="Q8R429">
    <property type="interactions" value="2"/>
</dbReference>
<dbReference type="MINT" id="Q8R429"/>
<dbReference type="STRING" id="10090.ENSMUSP00000032974"/>
<dbReference type="ChEMBL" id="CHEMBL4523404"/>
<dbReference type="GlyGen" id="Q8R429">
    <property type="glycosylation" value="2 sites, 1 O-linked glycan (2 sites)"/>
</dbReference>
<dbReference type="iPTMnet" id="Q8R429"/>
<dbReference type="PhosphoSitePlus" id="Q8R429"/>
<dbReference type="SwissPalm" id="Q8R429"/>
<dbReference type="jPOST" id="Q8R429"/>
<dbReference type="PaxDb" id="10090-ENSMUSP00000032974"/>
<dbReference type="PeptideAtlas" id="Q8R429"/>
<dbReference type="ProteomicsDB" id="265122"/>
<dbReference type="Antibodypedia" id="26608">
    <property type="antibodies" value="379 antibodies from 37 providers"/>
</dbReference>
<dbReference type="DNASU" id="11937"/>
<dbReference type="Ensembl" id="ENSMUST00000032974.13">
    <property type="protein sequence ID" value="ENSMUSP00000032974.7"/>
    <property type="gene ID" value="ENSMUSG00000030730.13"/>
</dbReference>
<dbReference type="GeneID" id="11937"/>
<dbReference type="KEGG" id="mmu:11937"/>
<dbReference type="UCSC" id="uc009jrf.1">
    <property type="organism name" value="mouse"/>
</dbReference>
<dbReference type="AGR" id="MGI:105058"/>
<dbReference type="CTD" id="487"/>
<dbReference type="MGI" id="MGI:105058">
    <property type="gene designation" value="Atp2a1"/>
</dbReference>
<dbReference type="VEuPathDB" id="HostDB:ENSMUSG00000030730"/>
<dbReference type="eggNOG" id="KOG0202">
    <property type="taxonomic scope" value="Eukaryota"/>
</dbReference>
<dbReference type="GeneTree" id="ENSGT00940000159895"/>
<dbReference type="HOGENOM" id="CLU_002360_3_2_1"/>
<dbReference type="InParanoid" id="Q8R429"/>
<dbReference type="OMA" id="PVCSIVF"/>
<dbReference type="OrthoDB" id="3352408at2759"/>
<dbReference type="PhylomeDB" id="Q8R429"/>
<dbReference type="TreeFam" id="TF300651"/>
<dbReference type="Reactome" id="R-MMU-418359">
    <property type="pathway name" value="Reduction of cytosolic Ca++ levels"/>
</dbReference>
<dbReference type="Reactome" id="R-MMU-5578775">
    <property type="pathway name" value="Ion homeostasis"/>
</dbReference>
<dbReference type="Reactome" id="R-MMU-936837">
    <property type="pathway name" value="Ion transport by P-type ATPases"/>
</dbReference>
<dbReference type="BioGRID-ORCS" id="11937">
    <property type="hits" value="0 hits in 79 CRISPR screens"/>
</dbReference>
<dbReference type="CD-CODE" id="CE726F99">
    <property type="entry name" value="Postsynaptic density"/>
</dbReference>
<dbReference type="ChiTaRS" id="Atp2a1">
    <property type="organism name" value="mouse"/>
</dbReference>
<dbReference type="PRO" id="PR:Q8R429"/>
<dbReference type="Proteomes" id="UP000000589">
    <property type="component" value="Chromosome 7"/>
</dbReference>
<dbReference type="RNAct" id="Q8R429">
    <property type="molecule type" value="protein"/>
</dbReference>
<dbReference type="Bgee" id="ENSMUSG00000030730">
    <property type="expression patterns" value="Expressed in tarsal region and 123 other cell types or tissues"/>
</dbReference>
<dbReference type="ExpressionAtlas" id="Q8R429">
    <property type="expression patterns" value="baseline and differential"/>
</dbReference>
<dbReference type="GO" id="GO:0005783">
    <property type="term" value="C:endoplasmic reticulum"/>
    <property type="evidence" value="ECO:0000250"/>
    <property type="project" value="UniProtKB"/>
</dbReference>
<dbReference type="GO" id="GO:0005789">
    <property type="term" value="C:endoplasmic reticulum membrane"/>
    <property type="evidence" value="ECO:0000250"/>
    <property type="project" value="UniProtKB"/>
</dbReference>
<dbReference type="GO" id="GO:0005793">
    <property type="term" value="C:endoplasmic reticulum-Golgi intermediate compartment"/>
    <property type="evidence" value="ECO:0000250"/>
    <property type="project" value="UniProtKB"/>
</dbReference>
<dbReference type="GO" id="GO:0031673">
    <property type="term" value="C:H zone"/>
    <property type="evidence" value="ECO:0000250"/>
    <property type="project" value="UniProtKB"/>
</dbReference>
<dbReference type="GO" id="GO:0031674">
    <property type="term" value="C:I band"/>
    <property type="evidence" value="ECO:0000250"/>
    <property type="project" value="UniProtKB"/>
</dbReference>
<dbReference type="GO" id="GO:0016020">
    <property type="term" value="C:membrane"/>
    <property type="evidence" value="ECO:0000250"/>
    <property type="project" value="UniProtKB"/>
</dbReference>
<dbReference type="GO" id="GO:0005739">
    <property type="term" value="C:mitochondrion"/>
    <property type="evidence" value="ECO:0007669"/>
    <property type="project" value="GOC"/>
</dbReference>
<dbReference type="GO" id="GO:0048471">
    <property type="term" value="C:perinuclear region of cytoplasm"/>
    <property type="evidence" value="ECO:0000250"/>
    <property type="project" value="UniProtKB"/>
</dbReference>
<dbReference type="GO" id="GO:0016529">
    <property type="term" value="C:sarcoplasmic reticulum"/>
    <property type="evidence" value="ECO:0000314"/>
    <property type="project" value="MGI"/>
</dbReference>
<dbReference type="GO" id="GO:0033017">
    <property type="term" value="C:sarcoplasmic reticulum membrane"/>
    <property type="evidence" value="ECO:0000314"/>
    <property type="project" value="UniProtKB"/>
</dbReference>
<dbReference type="GO" id="GO:0005524">
    <property type="term" value="F:ATP binding"/>
    <property type="evidence" value="ECO:0000250"/>
    <property type="project" value="UniProtKB"/>
</dbReference>
<dbReference type="GO" id="GO:0016887">
    <property type="term" value="F:ATP hydrolysis activity"/>
    <property type="evidence" value="ECO:0007669"/>
    <property type="project" value="InterPro"/>
</dbReference>
<dbReference type="GO" id="GO:0005509">
    <property type="term" value="F:calcium ion binding"/>
    <property type="evidence" value="ECO:0000314"/>
    <property type="project" value="MGI"/>
</dbReference>
<dbReference type="GO" id="GO:0005388">
    <property type="term" value="F:P-type calcium transporter activity"/>
    <property type="evidence" value="ECO:0000250"/>
    <property type="project" value="UniProtKB"/>
</dbReference>
<dbReference type="GO" id="GO:0042803">
    <property type="term" value="F:protein homodimerization activity"/>
    <property type="evidence" value="ECO:0007669"/>
    <property type="project" value="Ensembl"/>
</dbReference>
<dbReference type="GO" id="GO:0008637">
    <property type="term" value="P:apoptotic mitochondrial changes"/>
    <property type="evidence" value="ECO:0007669"/>
    <property type="project" value="Ensembl"/>
</dbReference>
<dbReference type="GO" id="GO:0070509">
    <property type="term" value="P:calcium ion import"/>
    <property type="evidence" value="ECO:0007669"/>
    <property type="project" value="Ensembl"/>
</dbReference>
<dbReference type="GO" id="GO:1990036">
    <property type="term" value="P:calcium ion import into sarcoplasmic reticulum"/>
    <property type="evidence" value="ECO:0000250"/>
    <property type="project" value="UniProtKB"/>
</dbReference>
<dbReference type="GO" id="GO:0006816">
    <property type="term" value="P:calcium ion transport"/>
    <property type="evidence" value="ECO:0000250"/>
    <property type="project" value="UniProtKB"/>
</dbReference>
<dbReference type="GO" id="GO:0070059">
    <property type="term" value="P:intrinsic apoptotic signaling pathway in response to endoplasmic reticulum stress"/>
    <property type="evidence" value="ECO:0007669"/>
    <property type="project" value="Ensembl"/>
</dbReference>
<dbReference type="GO" id="GO:0051659">
    <property type="term" value="P:maintenance of mitochondrion location"/>
    <property type="evidence" value="ECO:0007669"/>
    <property type="project" value="Ensembl"/>
</dbReference>
<dbReference type="GO" id="GO:0032471">
    <property type="term" value="P:negative regulation of endoplasmic reticulum calcium ion concentration"/>
    <property type="evidence" value="ECO:0007669"/>
    <property type="project" value="Ensembl"/>
</dbReference>
<dbReference type="GO" id="GO:0045988">
    <property type="term" value="P:negative regulation of striated muscle contraction"/>
    <property type="evidence" value="ECO:0000250"/>
    <property type="project" value="UniProtKB"/>
</dbReference>
<dbReference type="GO" id="GO:1901896">
    <property type="term" value="P:positive regulation of ATPase-coupled calcium transmembrane transporter activity"/>
    <property type="evidence" value="ECO:0000250"/>
    <property type="project" value="UniProtKB"/>
</dbReference>
<dbReference type="GO" id="GO:1902082">
    <property type="term" value="P:positive regulation of calcium ion import into sarcoplasmic reticulum"/>
    <property type="evidence" value="ECO:0000250"/>
    <property type="project" value="UniProtKB"/>
</dbReference>
<dbReference type="GO" id="GO:0106134">
    <property type="term" value="P:positive regulation of cardiac muscle cell contraction"/>
    <property type="evidence" value="ECO:0000250"/>
    <property type="project" value="UniProtKB"/>
</dbReference>
<dbReference type="GO" id="GO:0032470">
    <property type="term" value="P:positive regulation of endoplasmic reticulum calcium ion concentration"/>
    <property type="evidence" value="ECO:0007669"/>
    <property type="project" value="Ensembl"/>
</dbReference>
<dbReference type="GO" id="GO:0031448">
    <property type="term" value="P:positive regulation of fast-twitch skeletal muscle fiber contraction"/>
    <property type="evidence" value="ECO:0000250"/>
    <property type="project" value="UniProtKB"/>
</dbReference>
<dbReference type="GO" id="GO:0051561">
    <property type="term" value="P:positive regulation of mitochondrial calcium ion concentration"/>
    <property type="evidence" value="ECO:0007669"/>
    <property type="project" value="Ensembl"/>
</dbReference>
<dbReference type="GO" id="GO:0006937">
    <property type="term" value="P:regulation of muscle contraction"/>
    <property type="evidence" value="ECO:0000304"/>
    <property type="project" value="MGI"/>
</dbReference>
<dbReference type="GO" id="GO:0006942">
    <property type="term" value="P:regulation of striated muscle contraction"/>
    <property type="evidence" value="ECO:0000250"/>
    <property type="project" value="UniProtKB"/>
</dbReference>
<dbReference type="GO" id="GO:0090076">
    <property type="term" value="P:relaxation of skeletal muscle"/>
    <property type="evidence" value="ECO:0007669"/>
    <property type="project" value="Ensembl"/>
</dbReference>
<dbReference type="CDD" id="cd02083">
    <property type="entry name" value="P-type_ATPase_SERCA"/>
    <property type="match status" value="1"/>
</dbReference>
<dbReference type="FunFam" id="3.40.1110.10:FF:000003">
    <property type="entry name" value="Calcium-transporting ATPase"/>
    <property type="match status" value="1"/>
</dbReference>
<dbReference type="FunFam" id="3.40.50.1000:FF:000005">
    <property type="entry name" value="Calcium-transporting ATPase 1"/>
    <property type="match status" value="1"/>
</dbReference>
<dbReference type="FunFam" id="1.20.1110.10:FF:000065">
    <property type="entry name" value="Sarcoplasmic/endoplasmic reticulum calcium ATPase 1"/>
    <property type="match status" value="3"/>
</dbReference>
<dbReference type="FunFam" id="2.70.150.10:FF:000160">
    <property type="entry name" value="Sarcoplasmic/endoplasmic reticulum calcium ATPase 1"/>
    <property type="match status" value="2"/>
</dbReference>
<dbReference type="Gene3D" id="3.40.1110.10">
    <property type="entry name" value="Calcium-transporting ATPase, cytoplasmic domain N"/>
    <property type="match status" value="1"/>
</dbReference>
<dbReference type="Gene3D" id="2.70.150.10">
    <property type="entry name" value="Calcium-transporting ATPase, cytoplasmic transduction domain A"/>
    <property type="match status" value="1"/>
</dbReference>
<dbReference type="Gene3D" id="1.20.1110.10">
    <property type="entry name" value="Calcium-transporting ATPase, transmembrane domain"/>
    <property type="match status" value="1"/>
</dbReference>
<dbReference type="Gene3D" id="3.40.50.1000">
    <property type="entry name" value="HAD superfamily/HAD-like"/>
    <property type="match status" value="1"/>
</dbReference>
<dbReference type="InterPro" id="IPR006068">
    <property type="entry name" value="ATPase_P-typ_cation-transptr_C"/>
</dbReference>
<dbReference type="InterPro" id="IPR004014">
    <property type="entry name" value="ATPase_P-typ_cation-transptr_N"/>
</dbReference>
<dbReference type="InterPro" id="IPR023299">
    <property type="entry name" value="ATPase_P-typ_cyto_dom_N"/>
</dbReference>
<dbReference type="InterPro" id="IPR018303">
    <property type="entry name" value="ATPase_P-typ_P_site"/>
</dbReference>
<dbReference type="InterPro" id="IPR023298">
    <property type="entry name" value="ATPase_P-typ_TM_dom_sf"/>
</dbReference>
<dbReference type="InterPro" id="IPR008250">
    <property type="entry name" value="ATPase_P-typ_transduc_dom_A_sf"/>
</dbReference>
<dbReference type="InterPro" id="IPR036412">
    <property type="entry name" value="HAD-like_sf"/>
</dbReference>
<dbReference type="InterPro" id="IPR023214">
    <property type="entry name" value="HAD_sf"/>
</dbReference>
<dbReference type="InterPro" id="IPR005782">
    <property type="entry name" value="P-type_ATPase_IIA"/>
</dbReference>
<dbReference type="InterPro" id="IPR001757">
    <property type="entry name" value="P_typ_ATPase"/>
</dbReference>
<dbReference type="InterPro" id="IPR044492">
    <property type="entry name" value="P_typ_ATPase_HD_dom"/>
</dbReference>
<dbReference type="NCBIfam" id="TIGR01116">
    <property type="entry name" value="ATPase-IIA1_Ca"/>
    <property type="match status" value="1"/>
</dbReference>
<dbReference type="NCBIfam" id="TIGR01494">
    <property type="entry name" value="ATPase_P-type"/>
    <property type="match status" value="2"/>
</dbReference>
<dbReference type="PANTHER" id="PTHR42861">
    <property type="entry name" value="CALCIUM-TRANSPORTING ATPASE"/>
    <property type="match status" value="1"/>
</dbReference>
<dbReference type="Pfam" id="PF13246">
    <property type="entry name" value="Cation_ATPase"/>
    <property type="match status" value="1"/>
</dbReference>
<dbReference type="Pfam" id="PF00689">
    <property type="entry name" value="Cation_ATPase_C"/>
    <property type="match status" value="1"/>
</dbReference>
<dbReference type="Pfam" id="PF00690">
    <property type="entry name" value="Cation_ATPase_N"/>
    <property type="match status" value="1"/>
</dbReference>
<dbReference type="Pfam" id="PF00122">
    <property type="entry name" value="E1-E2_ATPase"/>
    <property type="match status" value="1"/>
</dbReference>
<dbReference type="Pfam" id="PF00702">
    <property type="entry name" value="Hydrolase"/>
    <property type="match status" value="1"/>
</dbReference>
<dbReference type="PRINTS" id="PR00119">
    <property type="entry name" value="CATATPASE"/>
</dbReference>
<dbReference type="PRINTS" id="PR00120">
    <property type="entry name" value="HATPASE"/>
</dbReference>
<dbReference type="SFLD" id="SFLDG00002">
    <property type="entry name" value="C1.7:_P-type_atpase_like"/>
    <property type="match status" value="1"/>
</dbReference>
<dbReference type="SFLD" id="SFLDF00027">
    <property type="entry name" value="p-type_atpase"/>
    <property type="match status" value="1"/>
</dbReference>
<dbReference type="SMART" id="SM00831">
    <property type="entry name" value="Cation_ATPase_N"/>
    <property type="match status" value="1"/>
</dbReference>
<dbReference type="SUPFAM" id="SSF81653">
    <property type="entry name" value="Calcium ATPase, transduction domain A"/>
    <property type="match status" value="1"/>
</dbReference>
<dbReference type="SUPFAM" id="SSF81665">
    <property type="entry name" value="Calcium ATPase, transmembrane domain M"/>
    <property type="match status" value="1"/>
</dbReference>
<dbReference type="SUPFAM" id="SSF56784">
    <property type="entry name" value="HAD-like"/>
    <property type="match status" value="1"/>
</dbReference>
<dbReference type="SUPFAM" id="SSF81660">
    <property type="entry name" value="Metal cation-transporting ATPase, ATP-binding domain N"/>
    <property type="match status" value="1"/>
</dbReference>
<dbReference type="PROSITE" id="PS00154">
    <property type="entry name" value="ATPASE_E1_E2"/>
    <property type="match status" value="1"/>
</dbReference>
<comment type="function">
    <text evidence="4 5 6 7 8">Key regulator of striated muscle performance by acting as the major Ca(2+) ATPase responsible for the reuptake of cytosolic Ca(2+) into the sarcoplasmic reticulum (PubMed:21697544, PubMed:22961106, PubMed:25640239, PubMed:26816378, PubMed:27923914). Catalyzes the hydrolysis of ATP coupled with the translocation of calcium from the cytosol to the sarcoplasmic reticulum lumen. Contributes to calcium sequestration involved in muscular excitation/contraction (PubMed:21697544, PubMed:22961106, PubMed:25640239, PubMed:26816378).</text>
</comment>
<comment type="catalytic activity">
    <reaction evidence="4 7">
        <text>Ca(2+)(in) + ATP + H2O = Ca(2+)(out) + ADP + phosphate + H(+)</text>
        <dbReference type="Rhea" id="RHEA:18105"/>
        <dbReference type="ChEBI" id="CHEBI:15377"/>
        <dbReference type="ChEBI" id="CHEBI:15378"/>
        <dbReference type="ChEBI" id="CHEBI:29108"/>
        <dbReference type="ChEBI" id="CHEBI:30616"/>
        <dbReference type="ChEBI" id="CHEBI:43474"/>
        <dbReference type="ChEBI" id="CHEBI:456216"/>
        <dbReference type="EC" id="7.2.2.10"/>
    </reaction>
    <physiologicalReaction direction="left-to-right" evidence="4 7">
        <dbReference type="Rhea" id="RHEA:18106"/>
    </physiologicalReaction>
</comment>
<comment type="cofactor">
    <cofactor evidence="2">
        <name>Mg(2+)</name>
        <dbReference type="ChEBI" id="CHEBI:18420"/>
    </cofactor>
</comment>
<comment type="activity regulation">
    <text evidence="2 4 5 6 7">Inhibited by sarcolipin (SLN) and myoregulin (MRLN) (PubMed:21697544, PubMed:22961106, PubMed:25640239). Has also been shown to be reversibly inhibited by phospholamban (PLN) at low calcium concentrations in vitro (By similarity). Dephosphorylated PLN decreases the apparent affinity of the ATPase for calcium in vitro and this inhibition is regulated by the phosphorylation of PLN (By similarity). Enhanced by DWORF; DWORF increases activity by displacing sarcolipin (SLN), phospholamban (PLN) and myoregulin (MRLN) (PubMed:26816378).</text>
</comment>
<comment type="subunit">
    <text evidence="1 4 5 6 7">Interacts with sarcolipin (SLN) (PubMed:21697544, PubMed:22961106). Interacts with phospholamban (PLN) (PubMed:26816378). Interacts with myoregulin (MRLN) (PubMed:25640239). Interacts with DWORF (PubMed:26816378). Interacts with VMP1 (By similarity).</text>
</comment>
<comment type="subcellular location">
    <subcellularLocation>
        <location evidence="2">Endoplasmic reticulum membrane</location>
        <topology evidence="2">Multi-pass membrane protein</topology>
    </subcellularLocation>
    <subcellularLocation>
        <location evidence="7">Sarcoplasmic reticulum membrane</location>
        <topology evidence="2">Multi-pass membrane protein</topology>
    </subcellularLocation>
</comment>
<comment type="domain">
    <text evidence="2">Ca(2+) and ATP binding cause major rearrangements of the cytoplasmic and transmembrane domains. According to the E1-E2 model, Ca(2+) binding to the cytosolic domain of the pump in the high-affinity E1 conformation is followed by the ATP-dependent phosphorylation of the active site Asp, giving rise to E1P. A conformational change of the phosphoenzyme gives rise to the low-affinity E2P state that exposes the Ca(2+) ions to the lumenal side and promotes Ca(2+) release. Dephosphorylation of the active site Asp mediates the subsequent return to the E1 conformation.</text>
</comment>
<comment type="domain">
    <text evidence="2">PLN and SLN both have a single transmembrane helix; both occupy a similar binding site on ATP2A1 that is situated between the ATP2A1 transmembrane helices.</text>
</comment>
<comment type="similarity">
    <text evidence="9">Belongs to the cation transport ATPase (P-type) (TC 3.A.3) family. Type IIA subfamily.</text>
</comment>
<gene>
    <name type="primary">Atp2a1</name>
</gene>
<proteinExistence type="evidence at protein level"/>
<keyword id="KW-0067">ATP-binding</keyword>
<keyword id="KW-0106">Calcium</keyword>
<keyword id="KW-0109">Calcium transport</keyword>
<keyword id="KW-1015">Disulfide bond</keyword>
<keyword id="KW-0256">Endoplasmic reticulum</keyword>
<keyword id="KW-0406">Ion transport</keyword>
<keyword id="KW-0460">Magnesium</keyword>
<keyword id="KW-0472">Membrane</keyword>
<keyword id="KW-0479">Metal-binding</keyword>
<keyword id="KW-0547">Nucleotide-binding</keyword>
<keyword id="KW-0597">Phosphoprotein</keyword>
<keyword id="KW-1185">Reference proteome</keyword>
<keyword id="KW-0703">Sarcoplasmic reticulum</keyword>
<keyword id="KW-1278">Translocase</keyword>
<keyword id="KW-0812">Transmembrane</keyword>
<keyword id="KW-1133">Transmembrane helix</keyword>
<keyword id="KW-0813">Transport</keyword>
<protein>
    <recommendedName>
        <fullName>Sarcoplasmic/endoplasmic reticulum calcium ATPase 1</fullName>
        <shortName>SERCA1</shortName>
        <shortName>SR Ca(2+)-ATPase 1</shortName>
        <ecNumber evidence="4 7">7.2.2.10</ecNumber>
    </recommendedName>
    <alternativeName>
        <fullName>Calcium pump 1</fullName>
    </alternativeName>
    <alternativeName>
        <fullName>Calcium-transporting ATPase sarcoplasmic reticulum type, fast twitch skeletal muscle isoform</fullName>
    </alternativeName>
    <alternativeName>
        <fullName>Endoplasmic reticulum class 1/2 Ca(2+) ATPase</fullName>
    </alternativeName>
</protein>
<reference key="1">
    <citation type="submission" date="2002-03" db="EMBL/GenBank/DDBJ databases">
        <title>Towards a complete inventory of calcium transporters of the house mouse.</title>
        <authorList>
            <person name="Kraev A."/>
        </authorList>
    </citation>
    <scope>NUCLEOTIDE SEQUENCE [MRNA]</scope>
    <source>
        <strain>BALB/c X CD-1</strain>
        <tissue>Skeletal muscle</tissue>
    </source>
</reference>
<reference key="2">
    <citation type="journal article" date="2004" name="Genome Res.">
        <title>The status, quality, and expansion of the NIH full-length cDNA project: the Mammalian Gene Collection (MGC).</title>
        <authorList>
            <consortium name="The MGC Project Team"/>
        </authorList>
    </citation>
    <scope>NUCLEOTIDE SEQUENCE [LARGE SCALE MRNA]</scope>
    <source>
        <strain>FVB/N</strain>
        <tissue>Salivary gland</tissue>
    </source>
</reference>
<reference key="3">
    <citation type="journal article" date="2010" name="Cell">
        <title>A tissue-specific atlas of mouse protein phosphorylation and expression.</title>
        <authorList>
            <person name="Huttlin E.L."/>
            <person name="Jedrychowski M.P."/>
            <person name="Elias J.E."/>
            <person name="Goswami T."/>
            <person name="Rad R."/>
            <person name="Beausoleil S.A."/>
            <person name="Villen J."/>
            <person name="Haas W."/>
            <person name="Sowa M.E."/>
            <person name="Gygi S.P."/>
        </authorList>
    </citation>
    <scope>IDENTIFICATION BY MASS SPECTROMETRY [LARGE SCALE ANALYSIS]</scope>
    <source>
        <tissue>Brown adipose tissue</tissue>
        <tissue>Heart</tissue>
        <tissue>Lung</tissue>
    </source>
</reference>
<reference key="4">
    <citation type="journal article" date="2011" name="Am. J. Physiol.">
        <title>Enhanced Ca2+ transport and muscle relaxation in skeletal muscle from sarcolipin-null mice.</title>
        <authorList>
            <person name="Tupling A.R."/>
            <person name="Bombardier E."/>
            <person name="Gupta S.C."/>
            <person name="Hussain D."/>
            <person name="Vigna C."/>
            <person name="Bloemberg D."/>
            <person name="Quadrilatero J."/>
            <person name="Trivieri M.G."/>
            <person name="Babu G.J."/>
            <person name="Backx P.H."/>
            <person name="Periasamy M."/>
            <person name="MacLennan D.H."/>
            <person name="Gramolini A.O."/>
        </authorList>
    </citation>
    <scope>FUNCTION</scope>
    <scope>INTERACTION WITH SLN</scope>
    <scope>ACTIVITY REGULATION</scope>
    <scope>CATALYTIC ACTIVITY</scope>
</reference>
<reference key="5">
    <citation type="journal article" date="2012" name="Nat. Med.">
        <title>Sarcolipin is a newly identified regulator of muscle-based thermogenesis in mammals.</title>
        <authorList>
            <person name="Bal N.C."/>
            <person name="Maurya S.K."/>
            <person name="Sopariwala D.H."/>
            <person name="Sahoo S.K."/>
            <person name="Gupta S.C."/>
            <person name="Shaikh S.A."/>
            <person name="Pant M."/>
            <person name="Rowland L.A."/>
            <person name="Bombardier E."/>
            <person name="Goonasekera S.A."/>
            <person name="Tupling A.R."/>
            <person name="Molkentin J.D."/>
            <person name="Periasamy M."/>
        </authorList>
    </citation>
    <scope>FUNCTION</scope>
    <scope>INTERACTION WITH SLN</scope>
    <scope>ACTIVITY REGULATION</scope>
</reference>
<reference key="6">
    <citation type="journal article" date="2015" name="Cell">
        <title>A micropeptide encoded by a putative long noncoding RNA regulates muscle performance.</title>
        <authorList>
            <person name="Anderson D.M."/>
            <person name="Anderson K.M."/>
            <person name="Chang C.L."/>
            <person name="Makarewich C.A."/>
            <person name="Nelson B.R."/>
            <person name="McAnally J.R."/>
            <person name="Kasaragod P."/>
            <person name="Shelton J.M."/>
            <person name="Liou J."/>
            <person name="Bassel-Duby R."/>
            <person name="Olson E.N."/>
        </authorList>
    </citation>
    <scope>FUNCTION</scope>
    <scope>ACTIVITY REGULATION</scope>
    <scope>INTERACTION WITH MRLN</scope>
</reference>
<reference key="7">
    <citation type="journal article" date="2016" name="Science">
        <title>Muscle physiology. A peptide encoded by a transcript annotated as long noncoding RNA enhances SERCA activity in muscle.</title>
        <authorList>
            <person name="Nelson B.R."/>
            <person name="Makarewich C.A."/>
            <person name="Anderson D.M."/>
            <person name="Winders B.R."/>
            <person name="Troupes C.D."/>
            <person name="Wu F."/>
            <person name="Reese A.L."/>
            <person name="McAnally J.R."/>
            <person name="Chen X."/>
            <person name="Kavalali E.T."/>
            <person name="Cannon S.C."/>
            <person name="Houser S.R."/>
            <person name="Bassel-Duby R."/>
            <person name="Olson E.N."/>
        </authorList>
    </citation>
    <scope>FUNCTION</scope>
    <scope>CATALYTIC ACTIVITY</scope>
    <scope>SUBCELLULAR LOCATION</scope>
    <scope>ACTIVITY REGULATION</scope>
    <scope>INTERACTION WITH DWORF AND PLN</scope>
    <scope>MUTAGENESIS OF VAL-795; LEU-802 AND PHE-809</scope>
</reference>
<reference key="8">
    <citation type="journal article" date="2016" name="Sci. Signal.">
        <title>Widespread control of calcium signaling by a family of SERCA-inhibiting micropeptides.</title>
        <authorList>
            <person name="Anderson D.M."/>
            <person name="Makarewich C.A."/>
            <person name="Anderson K.M."/>
            <person name="Shelton J.M."/>
            <person name="Bezprozvannaya S."/>
            <person name="Bassel-Duby R."/>
            <person name="Olson E.N."/>
        </authorList>
    </citation>
    <scope>FUNCTION</scope>
</reference>
<organism>
    <name type="scientific">Mus musculus</name>
    <name type="common">Mouse</name>
    <dbReference type="NCBI Taxonomy" id="10090"/>
    <lineage>
        <taxon>Eukaryota</taxon>
        <taxon>Metazoa</taxon>
        <taxon>Chordata</taxon>
        <taxon>Craniata</taxon>
        <taxon>Vertebrata</taxon>
        <taxon>Euteleostomi</taxon>
        <taxon>Mammalia</taxon>
        <taxon>Eutheria</taxon>
        <taxon>Euarchontoglires</taxon>
        <taxon>Glires</taxon>
        <taxon>Rodentia</taxon>
        <taxon>Myomorpha</taxon>
        <taxon>Muroidea</taxon>
        <taxon>Muridae</taxon>
        <taxon>Murinae</taxon>
        <taxon>Mus</taxon>
        <taxon>Mus</taxon>
    </lineage>
</organism>
<sequence>MEAAHSKSTEECLSYFGVSETTGLTPDQVKRHLEKYGPNELPAEEGKSLWELVVEQFEDLLVRILLLAACISFVLAWFEEGEETVTAFVEPFVILLILIANAIVGVWQERNAENAIEALKEYEPEMGKVYRADRKSVQRIKARDIVPGDIVEVAVGDKVPADIRILSIKSTTLRVDQSILTGESVSVIKHTDPVPDPRAVNQDKKNMLFSGTNIAAGKAVGIVATTGVSTEIGKIRDQMAATEQDKTPLQQKLDEFGEQLSKVISLICVAVWLINIGHFNDPVHGGSWFRGAIYYFKIAVALAVAAIPEGLPAVITTCLALGTRRMAKKNAIVRSLPSVETLGCTSVICSDKTGTLTTNQMSVCKMFIIDKVDGDVCSLNEFSITGSTYAPEGEVLKNDKPVRAGQYDGLVELATICALCNDSSLDFNETKGVYEKVGEATETALTTLVEKMNVFNTEVRSLSKVERANACNSVIRQLMKKEFTLEFSRDRKSMSVYCSPAKSSRAAVGNKMFVKGAPEGVIDRCNYVRVGTTRVPLTGPVKEKIMSVIKEWGTGRDTLRCLALATRDTPPKREEMVLDDSAKFMEYEMDLTFVGVVGMLDPPRKEVTGSIQLCRDAGIRVIMITGDNKGTAIAICRRIGIFSENEEVTDRAYTGREFDDLPLAEQREACRRACCFARVEPSHKSKIVEYLQSYDEITAMTGDGVNDAPALKKAEIGIAMGSGTAVAKTASEMVLADDNFSTIVAAVEEGRAIYNNMKQFIRYLISSNVGEVVCIFLTAALGLPEALIPVQLLWVNLVTDGLPATALGFNPPDLDIMDRPPRSPKEPLISGWLFFRYMAIGGYVGAATVGAAAWWFLYAEDGPHVSYHQLTHFMQCTEHNPEFDGLDCEVFEAPEPMTMALSVLVTIEMCNALNSLSENQSLLRMPPWVNIWLLGSICLSMSLHFLILYVDPLPMIFKLRALDFTQWLMVLKISLPVIGLDELLKFIARNYLEG</sequence>
<feature type="chain" id="PRO_0000046188" description="Sarcoplasmic/endoplasmic reticulum calcium ATPase 1">
    <location>
        <begin position="1"/>
        <end position="994"/>
    </location>
</feature>
<feature type="topological domain" description="Cytoplasmic" evidence="9">
    <location>
        <begin position="1"/>
        <end position="48"/>
    </location>
</feature>
<feature type="transmembrane region" description="Helical; Name=1" evidence="2">
    <location>
        <begin position="49"/>
        <end position="69"/>
    </location>
</feature>
<feature type="topological domain" description="Lumenal" evidence="9">
    <location>
        <begin position="70"/>
        <end position="89"/>
    </location>
</feature>
<feature type="transmembrane region" description="Helical; Name=2" evidence="2">
    <location>
        <begin position="90"/>
        <end position="110"/>
    </location>
</feature>
<feature type="topological domain" description="Cytoplasmic" evidence="9">
    <location>
        <begin position="111"/>
        <end position="253"/>
    </location>
</feature>
<feature type="transmembrane region" description="Helical; Name=3" evidence="2">
    <location>
        <begin position="254"/>
        <end position="273"/>
    </location>
</feature>
<feature type="topological domain" description="Lumenal" evidence="9">
    <location>
        <begin position="274"/>
        <end position="295"/>
    </location>
</feature>
<feature type="transmembrane region" description="Helical; Name=4" evidence="2">
    <location>
        <begin position="296"/>
        <end position="313"/>
    </location>
</feature>
<feature type="topological domain" description="Cytoplasmic" evidence="9">
    <location>
        <begin position="314"/>
        <end position="757"/>
    </location>
</feature>
<feature type="transmembrane region" description="Helical; Name=5" evidence="2">
    <location>
        <begin position="758"/>
        <end position="777"/>
    </location>
</feature>
<feature type="topological domain" description="Lumenal" evidence="9">
    <location>
        <begin position="778"/>
        <end position="787"/>
    </location>
</feature>
<feature type="transmembrane region" description="Helical; Name=6" evidence="2">
    <location>
        <begin position="788"/>
        <end position="808"/>
    </location>
</feature>
<feature type="topological domain" description="Cytoplasmic" evidence="9">
    <location>
        <begin position="809"/>
        <end position="828"/>
    </location>
</feature>
<feature type="transmembrane region" description="Helical; Name=7" evidence="2">
    <location>
        <begin position="829"/>
        <end position="851"/>
    </location>
</feature>
<feature type="topological domain" description="Lumenal" evidence="9">
    <location>
        <begin position="852"/>
        <end position="897"/>
    </location>
</feature>
<feature type="transmembrane region" description="Helical; Name=8" evidence="2">
    <location>
        <begin position="898"/>
        <end position="917"/>
    </location>
</feature>
<feature type="topological domain" description="Cytoplasmic" evidence="9">
    <location>
        <begin position="918"/>
        <end position="930"/>
    </location>
</feature>
<feature type="transmembrane region" description="Helical; Name=9" evidence="2">
    <location>
        <begin position="931"/>
        <end position="949"/>
    </location>
</feature>
<feature type="topological domain" description="Lumenal" evidence="9">
    <location>
        <begin position="950"/>
        <end position="964"/>
    </location>
</feature>
<feature type="transmembrane region" description="Helical; Name=10" evidence="2">
    <location>
        <begin position="965"/>
        <end position="985"/>
    </location>
</feature>
<feature type="topological domain" description="Cytoplasmic" evidence="9">
    <location>
        <begin position="986"/>
        <end position="994"/>
    </location>
</feature>
<feature type="region of interest" description="Interaction with PLN" evidence="2">
    <location>
        <begin position="788"/>
        <end position="808"/>
    </location>
</feature>
<feature type="region of interest" description="Interaction with PLN" evidence="2">
    <location>
        <begin position="932"/>
        <end position="943"/>
    </location>
</feature>
<feature type="active site" description="4-aspartylphosphate intermediate" evidence="2">
    <location>
        <position position="351"/>
    </location>
</feature>
<feature type="binding site" evidence="2">
    <location>
        <position position="304"/>
    </location>
    <ligand>
        <name>Ca(2+)</name>
        <dbReference type="ChEBI" id="CHEBI:29108"/>
        <label>1</label>
    </ligand>
</feature>
<feature type="binding site" evidence="2">
    <location>
        <position position="305"/>
    </location>
    <ligand>
        <name>Ca(2+)</name>
        <dbReference type="ChEBI" id="CHEBI:29108"/>
        <label>1</label>
    </ligand>
</feature>
<feature type="binding site" evidence="2">
    <location>
        <position position="307"/>
    </location>
    <ligand>
        <name>Ca(2+)</name>
        <dbReference type="ChEBI" id="CHEBI:29108"/>
        <label>1</label>
    </ligand>
</feature>
<feature type="binding site" evidence="2">
    <location>
        <position position="309"/>
    </location>
    <ligand>
        <name>Ca(2+)</name>
        <dbReference type="ChEBI" id="CHEBI:29108"/>
        <label>1</label>
    </ligand>
</feature>
<feature type="binding site" evidence="2">
    <location>
        <position position="351"/>
    </location>
    <ligand>
        <name>Mg(2+)</name>
        <dbReference type="ChEBI" id="CHEBI:18420"/>
    </ligand>
</feature>
<feature type="binding site" evidence="2">
    <location>
        <position position="353"/>
    </location>
    <ligand>
        <name>ATP</name>
        <dbReference type="ChEBI" id="CHEBI:30616"/>
    </ligand>
</feature>
<feature type="binding site" evidence="2">
    <location>
        <position position="353"/>
    </location>
    <ligand>
        <name>Mg(2+)</name>
        <dbReference type="ChEBI" id="CHEBI:18420"/>
    </ligand>
</feature>
<feature type="binding site" evidence="2">
    <location>
        <position position="442"/>
    </location>
    <ligand>
        <name>ATP</name>
        <dbReference type="ChEBI" id="CHEBI:30616"/>
    </ligand>
</feature>
<feature type="binding site" evidence="2">
    <location>
        <position position="489"/>
    </location>
    <ligand>
        <name>ATP</name>
        <dbReference type="ChEBI" id="CHEBI:30616"/>
    </ligand>
</feature>
<feature type="binding site" evidence="2">
    <location>
        <position position="515"/>
    </location>
    <ligand>
        <name>ATP</name>
        <dbReference type="ChEBI" id="CHEBI:30616"/>
    </ligand>
</feature>
<feature type="binding site" evidence="2">
    <location>
        <position position="560"/>
    </location>
    <ligand>
        <name>ATP</name>
        <dbReference type="ChEBI" id="CHEBI:30616"/>
    </ligand>
</feature>
<feature type="binding site" evidence="2">
    <location>
        <position position="625"/>
    </location>
    <ligand>
        <name>ATP</name>
        <dbReference type="ChEBI" id="CHEBI:30616"/>
    </ligand>
</feature>
<feature type="binding site" evidence="2">
    <location>
        <position position="626"/>
    </location>
    <ligand>
        <name>ATP</name>
        <dbReference type="ChEBI" id="CHEBI:30616"/>
    </ligand>
</feature>
<feature type="binding site" evidence="2">
    <location>
        <position position="627"/>
    </location>
    <ligand>
        <name>ATP</name>
        <dbReference type="ChEBI" id="CHEBI:30616"/>
    </ligand>
</feature>
<feature type="binding site" evidence="2">
    <location>
        <position position="678"/>
    </location>
    <ligand>
        <name>ATP</name>
        <dbReference type="ChEBI" id="CHEBI:30616"/>
    </ligand>
</feature>
<feature type="binding site" evidence="2">
    <location>
        <position position="684"/>
    </location>
    <ligand>
        <name>ATP</name>
        <dbReference type="ChEBI" id="CHEBI:30616"/>
    </ligand>
</feature>
<feature type="binding site" evidence="2">
    <location>
        <position position="703"/>
    </location>
    <ligand>
        <name>Mg(2+)</name>
        <dbReference type="ChEBI" id="CHEBI:18420"/>
    </ligand>
</feature>
<feature type="binding site" evidence="2">
    <location>
        <position position="706"/>
    </location>
    <ligand>
        <name>ATP</name>
        <dbReference type="ChEBI" id="CHEBI:30616"/>
    </ligand>
</feature>
<feature type="binding site" evidence="2">
    <location>
        <position position="768"/>
    </location>
    <ligand>
        <name>Ca(2+)</name>
        <dbReference type="ChEBI" id="CHEBI:29108"/>
        <label>2</label>
    </ligand>
</feature>
<feature type="binding site" evidence="2">
    <location>
        <position position="771"/>
    </location>
    <ligand>
        <name>Ca(2+)</name>
        <dbReference type="ChEBI" id="CHEBI:29108"/>
        <label>2</label>
    </ligand>
</feature>
<feature type="binding site" evidence="2">
    <location>
        <position position="796"/>
    </location>
    <ligand>
        <name>Ca(2+)</name>
        <dbReference type="ChEBI" id="CHEBI:29108"/>
        <label>1</label>
    </ligand>
</feature>
<feature type="binding site" evidence="2">
    <location>
        <position position="799"/>
    </location>
    <ligand>
        <name>Ca(2+)</name>
        <dbReference type="ChEBI" id="CHEBI:29108"/>
        <label>2</label>
    </ligand>
</feature>
<feature type="binding site" evidence="2">
    <location>
        <position position="800"/>
    </location>
    <ligand>
        <name>Ca(2+)</name>
        <dbReference type="ChEBI" id="CHEBI:29108"/>
        <label>1</label>
    </ligand>
</feature>
<feature type="binding site" evidence="2">
    <location>
        <position position="800"/>
    </location>
    <ligand>
        <name>Ca(2+)</name>
        <dbReference type="ChEBI" id="CHEBI:29108"/>
        <label>2</label>
    </ligand>
</feature>
<feature type="binding site" evidence="2">
    <location>
        <position position="908"/>
    </location>
    <ligand>
        <name>Ca(2+)</name>
        <dbReference type="ChEBI" id="CHEBI:29108"/>
        <label>2</label>
    </ligand>
</feature>
<feature type="modified residue" description="Phosphothreonine" evidence="3">
    <location>
        <position position="441"/>
    </location>
</feature>
<feature type="modified residue" description="Phosphothreonine" evidence="3">
    <location>
        <position position="569"/>
    </location>
</feature>
<feature type="modified residue" description="Phosphoserine" evidence="3">
    <location>
        <position position="581"/>
    </location>
</feature>
<feature type="modified residue" description="Phosphoserine" evidence="3">
    <location>
        <position position="643"/>
    </location>
</feature>
<feature type="disulfide bond" evidence="2">
    <location>
        <begin position="876"/>
        <end position="888"/>
    </location>
</feature>
<feature type="mutagenesis site" description="Impaired interaction with DWORF and PLN; when associated with A-802 and A-809." evidence="7">
    <original>V</original>
    <variation>A</variation>
    <location>
        <position position="795"/>
    </location>
</feature>
<feature type="mutagenesis site" description="Impaired interaction with DWORF and PLN; when associated with A-795 and A-809." evidence="7">
    <original>L</original>
    <variation>A</variation>
    <location>
        <position position="802"/>
    </location>
</feature>
<feature type="mutagenesis site" description="Impaired interaction with DWORF and PLN; when associated with A-796 and A-802." evidence="7">
    <original>F</original>
    <variation>A</variation>
    <location>
        <position position="809"/>
    </location>
</feature>
<evidence type="ECO:0000250" key="1">
    <source>
        <dbReference type="UniProtKB" id="O14983"/>
    </source>
</evidence>
<evidence type="ECO:0000250" key="2">
    <source>
        <dbReference type="UniProtKB" id="P04191"/>
    </source>
</evidence>
<evidence type="ECO:0000250" key="3">
    <source>
        <dbReference type="UniProtKB" id="Q64578"/>
    </source>
</evidence>
<evidence type="ECO:0000269" key="4">
    <source>
    </source>
</evidence>
<evidence type="ECO:0000269" key="5">
    <source>
    </source>
</evidence>
<evidence type="ECO:0000269" key="6">
    <source>
    </source>
</evidence>
<evidence type="ECO:0000269" key="7">
    <source>
    </source>
</evidence>
<evidence type="ECO:0000269" key="8">
    <source>
    </source>
</evidence>
<evidence type="ECO:0000305" key="9"/>